<comment type="function">
    <text evidence="2 3 4 5 6 7">Required for normal functioning of the late endocytic pathway including lysosome motility and late endosome-lysosome fusion (PubMed:16537643, PubMed:29940804, PubMed:30115618). Not required for the delivery of lysosomal membrane protein-containing vesicles to late endosomes (PubMed:29940804). In larval motor neurons, mediates the anterograde axonal long-range transport of presynaptic lysosome-related vesicles required for presynaptic biogenesis and synaptic function (PubMed:30115618, PubMed:30174114). Acts downstream of Rab2 during presynaptic precursor vesicle biogenesis (PubMed:33822845). Essential role in chromosome segregation (PubMed:15331635).</text>
</comment>
<comment type="subunit">
    <text evidence="2 5 6">Interacts with tubulin (PubMed:15331635). Interacts (in GTP-bound form) with Rilpl (PubMed:30115618). Interacts with unc-104 (PubMed:30174114).</text>
</comment>
<comment type="subcellular location">
    <subcellularLocation>
        <location evidence="3 5 6">Lysosome membrane</location>
    </subcellularLocation>
    <subcellularLocation>
        <location evidence="5 6">Synapse</location>
    </subcellularLocation>
    <subcellularLocation>
        <location evidence="5 6">Cell projection</location>
        <location evidence="5 6">Axon</location>
    </subcellularLocation>
    <subcellularLocation>
        <location evidence="5 6">Perikaryon</location>
    </subcellularLocation>
    <text evidence="5 6">Localizes the perinuclear region when associated with CG11448.</text>
</comment>
<comment type="tissue specificity">
    <text evidence="5">Expressed throughout development, from embryo to adult stage, in different tissues such as larval motor neurons, salivary glands, testis and ovaries (at protein level).</text>
</comment>
<comment type="disruption phenotype">
    <text evidence="4 5 6 7">Lethal from late larval stages (PubMed:29940804, PubMed:30115618). In garland cells, results in defective late endosome-lysosome fusion and inability to form a rapidly exchanging terminal lysosomal network (PubMed:29940804). In motor neurons, results in defective anterograde axonal long-range transport of lysosome-related vesicles which leads to defective protein localization to presynaptic active zone and synaptic vesicles (PubMed:30115618, PubMed:30174114, PubMed:33822845). Fully mature presynaptic vesicles containing synaptic vesicle proteins (e.g. VGlut) and presynaptic active zone proteins (e.g. brp/Bruchpilot) accumulate in the soma of motor neurons (PubMed:33822845). This results into a reduction of number of boutons per synapses which limits neurotransmitter release and leads to posterior paralysis (PubMed:30115618, PubMed:30174114). RNAi-mediated knockdown in larval presynaptic motor neurons results in defective presynaptic biogenesis (PubMed:30174114).</text>
</comment>
<comment type="similarity">
    <text evidence="10">Belongs to the small GTPase superfamily. Arf family.</text>
</comment>
<gene>
    <name evidence="9 11" type="primary">Arl8</name>
    <name evidence="8 11" type="synonym">Gie</name>
    <name evidence="11" type="ORF">CG7891</name>
</gene>
<protein>
    <recommendedName>
        <fullName evidence="9 11">ADP-ribosylation factor-like protein 8</fullName>
    </recommendedName>
    <alternativeName>
        <fullName>Novel small G protein indispensable for equal chromosome segregation</fullName>
        <shortName>dGie</shortName>
    </alternativeName>
</protein>
<feature type="chain" id="PRO_0000232927" description="ADP-ribosylation factor-like protein 8">
    <location>
        <begin position="1"/>
        <end position="186"/>
    </location>
</feature>
<feature type="intramembrane region" description="Note=Mediates targeting to membranes" evidence="1">
    <location>
        <begin position="1"/>
        <end position="19"/>
    </location>
</feature>
<feature type="binding site" evidence="1">
    <location>
        <begin position="29"/>
        <end position="35"/>
    </location>
    <ligand>
        <name>GTP</name>
        <dbReference type="ChEBI" id="CHEBI:37565"/>
    </ligand>
</feature>
<feature type="binding site" evidence="1">
    <location>
        <begin position="71"/>
        <end position="75"/>
    </location>
    <ligand>
        <name>GTP</name>
        <dbReference type="ChEBI" id="CHEBI:37565"/>
    </ligand>
</feature>
<feature type="binding site" evidence="1">
    <location>
        <begin position="130"/>
        <end position="133"/>
    </location>
    <ligand>
        <name>GTP</name>
        <dbReference type="ChEBI" id="CHEBI:37565"/>
    </ligand>
</feature>
<feature type="mutagenesis site" description="Probably constitutively inactive (GDP-locked form). Abolishes interaction with CG11448." evidence="5">
    <original>T</original>
    <variation>N</variation>
    <location>
        <position position="34"/>
    </location>
</feature>
<feature type="mutagenesis site" description="Probably constitutively active (GTP-locked form). Does not affect interaction with CG11448." evidence="5">
    <original>Q</original>
    <variation>L</variation>
    <location>
        <position position="75"/>
    </location>
</feature>
<accession>Q9VHV5</accession>
<evidence type="ECO:0000250" key="1"/>
<evidence type="ECO:0000269" key="2">
    <source>
    </source>
</evidence>
<evidence type="ECO:0000269" key="3">
    <source>
    </source>
</evidence>
<evidence type="ECO:0000269" key="4">
    <source>
    </source>
</evidence>
<evidence type="ECO:0000269" key="5">
    <source>
    </source>
</evidence>
<evidence type="ECO:0000269" key="6">
    <source>
    </source>
</evidence>
<evidence type="ECO:0000269" key="7">
    <source>
    </source>
</evidence>
<evidence type="ECO:0000303" key="8">
    <source>
    </source>
</evidence>
<evidence type="ECO:0000303" key="9">
    <source>
    </source>
</evidence>
<evidence type="ECO:0000305" key="10"/>
<evidence type="ECO:0000312" key="11">
    <source>
        <dbReference type="FlyBase" id="FBgn0037551"/>
    </source>
</evidence>
<proteinExistence type="evidence at protein level"/>
<reference key="1">
    <citation type="journal article" date="2004" name="J. Cell Sci.">
        <title>Novel small GTPase subfamily capable of associating with tubulin is required for chromosome segregation.</title>
        <authorList>
            <person name="Okai T."/>
            <person name="Araki Y."/>
            <person name="Tada M."/>
            <person name="Tateno T."/>
            <person name="Kontani K."/>
            <person name="Katada T."/>
        </authorList>
    </citation>
    <scope>NUCLEOTIDE SEQUENCE [MRNA]</scope>
    <scope>FUNCTION</scope>
    <scope>INTERACTION WITH TUBULIN</scope>
</reference>
<reference key="2">
    <citation type="journal article" date="2000" name="Science">
        <title>The genome sequence of Drosophila melanogaster.</title>
        <authorList>
            <person name="Adams M.D."/>
            <person name="Celniker S.E."/>
            <person name="Holt R.A."/>
            <person name="Evans C.A."/>
            <person name="Gocayne J.D."/>
            <person name="Amanatides P.G."/>
            <person name="Scherer S.E."/>
            <person name="Li P.W."/>
            <person name="Hoskins R.A."/>
            <person name="Galle R.F."/>
            <person name="George R.A."/>
            <person name="Lewis S.E."/>
            <person name="Richards S."/>
            <person name="Ashburner M."/>
            <person name="Henderson S.N."/>
            <person name="Sutton G.G."/>
            <person name="Wortman J.R."/>
            <person name="Yandell M.D."/>
            <person name="Zhang Q."/>
            <person name="Chen L.X."/>
            <person name="Brandon R.C."/>
            <person name="Rogers Y.-H.C."/>
            <person name="Blazej R.G."/>
            <person name="Champe M."/>
            <person name="Pfeiffer B.D."/>
            <person name="Wan K.H."/>
            <person name="Doyle C."/>
            <person name="Baxter E.G."/>
            <person name="Helt G."/>
            <person name="Nelson C.R."/>
            <person name="Miklos G.L.G."/>
            <person name="Abril J.F."/>
            <person name="Agbayani A."/>
            <person name="An H.-J."/>
            <person name="Andrews-Pfannkoch C."/>
            <person name="Baldwin D."/>
            <person name="Ballew R.M."/>
            <person name="Basu A."/>
            <person name="Baxendale J."/>
            <person name="Bayraktaroglu L."/>
            <person name="Beasley E.M."/>
            <person name="Beeson K.Y."/>
            <person name="Benos P.V."/>
            <person name="Berman B.P."/>
            <person name="Bhandari D."/>
            <person name="Bolshakov S."/>
            <person name="Borkova D."/>
            <person name="Botchan M.R."/>
            <person name="Bouck J."/>
            <person name="Brokstein P."/>
            <person name="Brottier P."/>
            <person name="Burtis K.C."/>
            <person name="Busam D.A."/>
            <person name="Butler H."/>
            <person name="Cadieu E."/>
            <person name="Center A."/>
            <person name="Chandra I."/>
            <person name="Cherry J.M."/>
            <person name="Cawley S."/>
            <person name="Dahlke C."/>
            <person name="Davenport L.B."/>
            <person name="Davies P."/>
            <person name="de Pablos B."/>
            <person name="Delcher A."/>
            <person name="Deng Z."/>
            <person name="Mays A.D."/>
            <person name="Dew I."/>
            <person name="Dietz S.M."/>
            <person name="Dodson K."/>
            <person name="Doup L.E."/>
            <person name="Downes M."/>
            <person name="Dugan-Rocha S."/>
            <person name="Dunkov B.C."/>
            <person name="Dunn P."/>
            <person name="Durbin K.J."/>
            <person name="Evangelista C.C."/>
            <person name="Ferraz C."/>
            <person name="Ferriera S."/>
            <person name="Fleischmann W."/>
            <person name="Fosler C."/>
            <person name="Gabrielian A.E."/>
            <person name="Garg N.S."/>
            <person name="Gelbart W.M."/>
            <person name="Glasser K."/>
            <person name="Glodek A."/>
            <person name="Gong F."/>
            <person name="Gorrell J.H."/>
            <person name="Gu Z."/>
            <person name="Guan P."/>
            <person name="Harris M."/>
            <person name="Harris N.L."/>
            <person name="Harvey D.A."/>
            <person name="Heiman T.J."/>
            <person name="Hernandez J.R."/>
            <person name="Houck J."/>
            <person name="Hostin D."/>
            <person name="Houston K.A."/>
            <person name="Howland T.J."/>
            <person name="Wei M.-H."/>
            <person name="Ibegwam C."/>
            <person name="Jalali M."/>
            <person name="Kalush F."/>
            <person name="Karpen G.H."/>
            <person name="Ke Z."/>
            <person name="Kennison J.A."/>
            <person name="Ketchum K.A."/>
            <person name="Kimmel B.E."/>
            <person name="Kodira C.D."/>
            <person name="Kraft C.L."/>
            <person name="Kravitz S."/>
            <person name="Kulp D."/>
            <person name="Lai Z."/>
            <person name="Lasko P."/>
            <person name="Lei Y."/>
            <person name="Levitsky A.A."/>
            <person name="Li J.H."/>
            <person name="Li Z."/>
            <person name="Liang Y."/>
            <person name="Lin X."/>
            <person name="Liu X."/>
            <person name="Mattei B."/>
            <person name="McIntosh T.C."/>
            <person name="McLeod M.P."/>
            <person name="McPherson D."/>
            <person name="Merkulov G."/>
            <person name="Milshina N.V."/>
            <person name="Mobarry C."/>
            <person name="Morris J."/>
            <person name="Moshrefi A."/>
            <person name="Mount S.M."/>
            <person name="Moy M."/>
            <person name="Murphy B."/>
            <person name="Murphy L."/>
            <person name="Muzny D.M."/>
            <person name="Nelson D.L."/>
            <person name="Nelson D.R."/>
            <person name="Nelson K.A."/>
            <person name="Nixon K."/>
            <person name="Nusskern D.R."/>
            <person name="Pacleb J.M."/>
            <person name="Palazzolo M."/>
            <person name="Pittman G.S."/>
            <person name="Pan S."/>
            <person name="Pollard J."/>
            <person name="Puri V."/>
            <person name="Reese M.G."/>
            <person name="Reinert K."/>
            <person name="Remington K."/>
            <person name="Saunders R.D.C."/>
            <person name="Scheeler F."/>
            <person name="Shen H."/>
            <person name="Shue B.C."/>
            <person name="Siden-Kiamos I."/>
            <person name="Simpson M."/>
            <person name="Skupski M.P."/>
            <person name="Smith T.J."/>
            <person name="Spier E."/>
            <person name="Spradling A.C."/>
            <person name="Stapleton M."/>
            <person name="Strong R."/>
            <person name="Sun E."/>
            <person name="Svirskas R."/>
            <person name="Tector C."/>
            <person name="Turner R."/>
            <person name="Venter E."/>
            <person name="Wang A.H."/>
            <person name="Wang X."/>
            <person name="Wang Z.-Y."/>
            <person name="Wassarman D.A."/>
            <person name="Weinstock G.M."/>
            <person name="Weissenbach J."/>
            <person name="Williams S.M."/>
            <person name="Woodage T."/>
            <person name="Worley K.C."/>
            <person name="Wu D."/>
            <person name="Yang S."/>
            <person name="Yao Q.A."/>
            <person name="Ye J."/>
            <person name="Yeh R.-F."/>
            <person name="Zaveri J.S."/>
            <person name="Zhan M."/>
            <person name="Zhang G."/>
            <person name="Zhao Q."/>
            <person name="Zheng L."/>
            <person name="Zheng X.H."/>
            <person name="Zhong F.N."/>
            <person name="Zhong W."/>
            <person name="Zhou X."/>
            <person name="Zhu S.C."/>
            <person name="Zhu X."/>
            <person name="Smith H.O."/>
            <person name="Gibbs R.A."/>
            <person name="Myers E.W."/>
            <person name="Rubin G.M."/>
            <person name="Venter J.C."/>
        </authorList>
    </citation>
    <scope>NUCLEOTIDE SEQUENCE [LARGE SCALE GENOMIC DNA]</scope>
    <source>
        <strain>Berkeley</strain>
    </source>
</reference>
<reference key="3">
    <citation type="journal article" date="2002" name="Genome Biol.">
        <title>Annotation of the Drosophila melanogaster euchromatic genome: a systematic review.</title>
        <authorList>
            <person name="Misra S."/>
            <person name="Crosby M.A."/>
            <person name="Mungall C.J."/>
            <person name="Matthews B.B."/>
            <person name="Campbell K.S."/>
            <person name="Hradecky P."/>
            <person name="Huang Y."/>
            <person name="Kaminker J.S."/>
            <person name="Millburn G.H."/>
            <person name="Prochnik S.E."/>
            <person name="Smith C.D."/>
            <person name="Tupy J.L."/>
            <person name="Whitfield E.J."/>
            <person name="Bayraktaroglu L."/>
            <person name="Berman B.P."/>
            <person name="Bettencourt B.R."/>
            <person name="Celniker S.E."/>
            <person name="de Grey A.D.N.J."/>
            <person name="Drysdale R.A."/>
            <person name="Harris N.L."/>
            <person name="Richter J."/>
            <person name="Russo S."/>
            <person name="Schroeder A.J."/>
            <person name="Shu S.Q."/>
            <person name="Stapleton M."/>
            <person name="Yamada C."/>
            <person name="Ashburner M."/>
            <person name="Gelbart W.M."/>
            <person name="Rubin G.M."/>
            <person name="Lewis S.E."/>
        </authorList>
    </citation>
    <scope>GENOME REANNOTATION</scope>
    <source>
        <strain>Berkeley</strain>
    </source>
</reference>
<reference key="4">
    <citation type="journal article" date="2002" name="Genome Biol.">
        <title>A Drosophila full-length cDNA resource.</title>
        <authorList>
            <person name="Stapleton M."/>
            <person name="Carlson J.W."/>
            <person name="Brokstein P."/>
            <person name="Yu C."/>
            <person name="Champe M."/>
            <person name="George R.A."/>
            <person name="Guarin H."/>
            <person name="Kronmiller B."/>
            <person name="Pacleb J.M."/>
            <person name="Park S."/>
            <person name="Wan K.H."/>
            <person name="Rubin G.M."/>
            <person name="Celniker S.E."/>
        </authorList>
    </citation>
    <scope>NUCLEOTIDE SEQUENCE [LARGE SCALE MRNA]</scope>
    <source>
        <strain>Berkeley</strain>
        <tissue>Embryo</tissue>
    </source>
</reference>
<reference key="5">
    <citation type="journal article" date="2006" name="J. Cell Sci.">
        <title>An N-terminally acetylated Arf-like GTPase is localised to lysosomes and affects their motility.</title>
        <authorList>
            <person name="Hofmann I."/>
            <person name="Munro S."/>
        </authorList>
    </citation>
    <scope>SUBCELLULAR LOCATION</scope>
</reference>
<reference key="6">
    <citation type="journal article" date="2018" name="Autophagy">
        <title>Drosophila Rab2 controls endosome-lysosome fusion and LAMP delivery to late endosomes.</title>
        <authorList>
            <person name="Lund V.K."/>
            <person name="Madsen K.L."/>
            <person name="Kjaerulff O."/>
        </authorList>
    </citation>
    <scope>FUNCTION</scope>
    <scope>DISRUPTION PHENOTYPE</scope>
</reference>
<reference key="7">
    <citation type="journal article" date="2018" name="Biol. Open">
        <title>The small G protein Arl8 contributes to lysosomal function and long-range axonal transport in Drosophila.</title>
        <authorList>
            <person name="Rosa-Ferreira C."/>
            <person name="Sweeney S.T."/>
            <person name="Munro S."/>
        </authorList>
    </citation>
    <scope>FUNCTION</scope>
    <scope>INTERACTION WITH RILPL</scope>
    <scope>SUBCELLULAR LOCATION</scope>
    <scope>DEVELOPMENTAL STAGE</scope>
    <scope>DISRUPTION PHENOTYPE</scope>
    <scope>MUTAGENESIS OF THR-34 AND GLN-75</scope>
</reference>
<reference key="8">
    <citation type="journal article" date="2018" name="Neuron">
        <title>Presynaptic Biogenesis Requires Axonal Transport of Lysosome-Related Vesicles.</title>
        <authorList>
            <person name="Vukoja A."/>
            <person name="Rey U."/>
            <person name="Petzoldt A.G."/>
            <person name="Ott C."/>
            <person name="Vollweiter D."/>
            <person name="Quentin C."/>
            <person name="Puchkov D."/>
            <person name="Reynolds E."/>
            <person name="Lehmann M."/>
            <person name="Hohensee S."/>
            <person name="Rosa S."/>
            <person name="Lipowsky R."/>
            <person name="Sigrist S.J."/>
            <person name="Haucke V."/>
        </authorList>
    </citation>
    <scope>FUNCTION</scope>
    <scope>INTERACTION WITH UNC-104</scope>
    <scope>SUBCELLULAR LOCATION</scope>
    <scope>DISRUPTION PHENOTYPE</scope>
</reference>
<reference key="9">
    <citation type="journal article" date="2021" name="J. Cell Biol.">
        <title>Rab2 regulates presynaptic precursor vesicle biogenesis at the trans-Golgi.</title>
        <authorList>
            <person name="Goetz T.W.B."/>
            <person name="Puchkov D."/>
            <person name="Lysiuk V."/>
            <person name="Luetzkendorf J."/>
            <person name="Nikonenko A.G."/>
            <person name="Quentin C."/>
            <person name="Lehmann M."/>
            <person name="Sigrist S.J."/>
            <person name="Petzoldt A.G."/>
        </authorList>
    </citation>
    <scope>FUNCTION</scope>
    <scope>DISRUPTION PHENOTYPE</scope>
</reference>
<keyword id="KW-0131">Cell cycle</keyword>
<keyword id="KW-0132">Cell division</keyword>
<keyword id="KW-0966">Cell projection</keyword>
<keyword id="KW-0159">Chromosome partition</keyword>
<keyword id="KW-0342">GTP-binding</keyword>
<keyword id="KW-0458">Lysosome</keyword>
<keyword id="KW-0472">Membrane</keyword>
<keyword id="KW-0498">Mitosis</keyword>
<keyword id="KW-0547">Nucleotide-binding</keyword>
<keyword id="KW-0653">Protein transport</keyword>
<keyword id="KW-1185">Reference proteome</keyword>
<keyword id="KW-0770">Synapse</keyword>
<keyword id="KW-0813">Transport</keyword>
<sequence length="186" mass="21254">MLALINRILEWFKSIFWKEEMELTLVGLQFSGKTTFVNVIASGQFAEDMIPTVGFNMRKITRGNVTIKVWDIGGQPRFRSMWERYCRGVNAIVYMVDAADLDKLEASRNELHSLLDKPQLAGIPVLVLGNKRDLPGALDETGLIERMNLSSIQDREICCYSISCKEKDNIDITLQWLIQHSKSQSR</sequence>
<organism>
    <name type="scientific">Drosophila melanogaster</name>
    <name type="common">Fruit fly</name>
    <dbReference type="NCBI Taxonomy" id="7227"/>
    <lineage>
        <taxon>Eukaryota</taxon>
        <taxon>Metazoa</taxon>
        <taxon>Ecdysozoa</taxon>
        <taxon>Arthropoda</taxon>
        <taxon>Hexapoda</taxon>
        <taxon>Insecta</taxon>
        <taxon>Pterygota</taxon>
        <taxon>Neoptera</taxon>
        <taxon>Endopterygota</taxon>
        <taxon>Diptera</taxon>
        <taxon>Brachycera</taxon>
        <taxon>Muscomorpha</taxon>
        <taxon>Ephydroidea</taxon>
        <taxon>Drosophilidae</taxon>
        <taxon>Drosophila</taxon>
        <taxon>Sophophora</taxon>
    </lineage>
</organism>
<name>ARL8_DROME</name>
<dbReference type="EMBL" id="AB185208">
    <property type="protein sequence ID" value="BAD30092.1"/>
    <property type="molecule type" value="mRNA"/>
</dbReference>
<dbReference type="EMBL" id="AE014297">
    <property type="protein sequence ID" value="AAF54194.1"/>
    <property type="molecule type" value="Genomic_DNA"/>
</dbReference>
<dbReference type="EMBL" id="AY094809">
    <property type="protein sequence ID" value="AAM11162.1"/>
    <property type="molecule type" value="mRNA"/>
</dbReference>
<dbReference type="RefSeq" id="NP_001287225.1">
    <property type="nucleotide sequence ID" value="NM_001300296.1"/>
</dbReference>
<dbReference type="RefSeq" id="NP_001287226.1">
    <property type="nucleotide sequence ID" value="NM_001300297.1"/>
</dbReference>
<dbReference type="RefSeq" id="NP_649769.1">
    <property type="nucleotide sequence ID" value="NM_141512.3"/>
</dbReference>
<dbReference type="SMR" id="Q9VHV5"/>
<dbReference type="BioGRID" id="66144">
    <property type="interactions" value="40"/>
</dbReference>
<dbReference type="FunCoup" id="Q9VHV5">
    <property type="interactions" value="1094"/>
</dbReference>
<dbReference type="IntAct" id="Q9VHV5">
    <property type="interactions" value="78"/>
</dbReference>
<dbReference type="STRING" id="7227.FBpp0308780"/>
<dbReference type="PaxDb" id="7227-FBpp0081290"/>
<dbReference type="DNASU" id="40961"/>
<dbReference type="EnsemblMetazoa" id="FBtr0081794">
    <property type="protein sequence ID" value="FBpp0081290"/>
    <property type="gene ID" value="FBgn0037551"/>
</dbReference>
<dbReference type="EnsemblMetazoa" id="FBtr0339723">
    <property type="protein sequence ID" value="FBpp0308779"/>
    <property type="gene ID" value="FBgn0037551"/>
</dbReference>
<dbReference type="EnsemblMetazoa" id="FBtr0339724">
    <property type="protein sequence ID" value="FBpp0308780"/>
    <property type="gene ID" value="FBgn0037551"/>
</dbReference>
<dbReference type="GeneID" id="40961"/>
<dbReference type="KEGG" id="dme:Dmel_CG7891"/>
<dbReference type="UCSC" id="CG7891-RA">
    <property type="organism name" value="d. melanogaster"/>
</dbReference>
<dbReference type="AGR" id="FB:FBgn0037551"/>
<dbReference type="CTD" id="327551"/>
<dbReference type="FlyBase" id="FBgn0037551">
    <property type="gene designation" value="Arl8"/>
</dbReference>
<dbReference type="VEuPathDB" id="VectorBase:FBgn0037551"/>
<dbReference type="eggNOG" id="KOG0075">
    <property type="taxonomic scope" value="Eukaryota"/>
</dbReference>
<dbReference type="GeneTree" id="ENSGT00940000165940"/>
<dbReference type="HOGENOM" id="CLU_040729_10_0_1"/>
<dbReference type="InParanoid" id="Q9VHV5"/>
<dbReference type="OMA" id="FRNMWER"/>
<dbReference type="OrthoDB" id="2011769at2759"/>
<dbReference type="PhylomeDB" id="Q9VHV5"/>
<dbReference type="Reactome" id="R-DME-6798695">
    <property type="pathway name" value="Neutrophil degranulation"/>
</dbReference>
<dbReference type="BioGRID-ORCS" id="40961">
    <property type="hits" value="1 hit in 3 CRISPR screens"/>
</dbReference>
<dbReference type="ChiTaRS" id="Gie">
    <property type="organism name" value="fly"/>
</dbReference>
<dbReference type="GenomeRNAi" id="40961"/>
<dbReference type="PRO" id="PR:Q9VHV5"/>
<dbReference type="Proteomes" id="UP000000803">
    <property type="component" value="Chromosome 3R"/>
</dbReference>
<dbReference type="Bgee" id="FBgn0037551">
    <property type="expression patterns" value="Expressed in adult plasmatocyte in brain and 236 other cell types or tissues"/>
</dbReference>
<dbReference type="ExpressionAtlas" id="Q9VHV5">
    <property type="expression patterns" value="baseline and differential"/>
</dbReference>
<dbReference type="GO" id="GO:0030424">
    <property type="term" value="C:axon"/>
    <property type="evidence" value="ECO:0000314"/>
    <property type="project" value="UniProtKB"/>
</dbReference>
<dbReference type="GO" id="GO:1904115">
    <property type="term" value="C:axon cytoplasm"/>
    <property type="evidence" value="ECO:0007669"/>
    <property type="project" value="GOC"/>
</dbReference>
<dbReference type="GO" id="GO:0005737">
    <property type="term" value="C:cytoplasm"/>
    <property type="evidence" value="ECO:0000250"/>
    <property type="project" value="UniProtKB"/>
</dbReference>
<dbReference type="GO" id="GO:0098574">
    <property type="term" value="C:cytoplasmic side of lysosomal membrane"/>
    <property type="evidence" value="ECO:0000314"/>
    <property type="project" value="UniProtKB"/>
</dbReference>
<dbReference type="GO" id="GO:0005765">
    <property type="term" value="C:lysosomal membrane"/>
    <property type="evidence" value="ECO:0000314"/>
    <property type="project" value="UniProtKB"/>
</dbReference>
<dbReference type="GO" id="GO:0005764">
    <property type="term" value="C:lysosome"/>
    <property type="evidence" value="ECO:0000314"/>
    <property type="project" value="FlyBase"/>
</dbReference>
<dbReference type="GO" id="GO:0030496">
    <property type="term" value="C:midbody"/>
    <property type="evidence" value="ECO:0000250"/>
    <property type="project" value="UniProtKB"/>
</dbReference>
<dbReference type="GO" id="GO:0043204">
    <property type="term" value="C:perikaryon"/>
    <property type="evidence" value="ECO:0007669"/>
    <property type="project" value="UniProtKB-SubCell"/>
</dbReference>
<dbReference type="GO" id="GO:0048471">
    <property type="term" value="C:perinuclear region of cytoplasm"/>
    <property type="evidence" value="ECO:0000314"/>
    <property type="project" value="UniProtKB"/>
</dbReference>
<dbReference type="GO" id="GO:1990027">
    <property type="term" value="C:S bouton"/>
    <property type="evidence" value="ECO:0000314"/>
    <property type="project" value="UniProtKB"/>
</dbReference>
<dbReference type="GO" id="GO:0051233">
    <property type="term" value="C:spindle midzone"/>
    <property type="evidence" value="ECO:0000250"/>
    <property type="project" value="UniProtKB"/>
</dbReference>
<dbReference type="GO" id="GO:0045202">
    <property type="term" value="C:synapse"/>
    <property type="evidence" value="ECO:0000314"/>
    <property type="project" value="UniProtKB"/>
</dbReference>
<dbReference type="GO" id="GO:0043014">
    <property type="term" value="F:alpha-tubulin binding"/>
    <property type="evidence" value="ECO:0000250"/>
    <property type="project" value="UniProtKB"/>
</dbReference>
<dbReference type="GO" id="GO:0048487">
    <property type="term" value="F:beta-tubulin binding"/>
    <property type="evidence" value="ECO:0000250"/>
    <property type="project" value="UniProtKB"/>
</dbReference>
<dbReference type="GO" id="GO:0019003">
    <property type="term" value="F:GDP binding"/>
    <property type="evidence" value="ECO:0000250"/>
    <property type="project" value="UniProtKB"/>
</dbReference>
<dbReference type="GO" id="GO:0005525">
    <property type="term" value="F:GTP binding"/>
    <property type="evidence" value="ECO:0000250"/>
    <property type="project" value="UniProtKB"/>
</dbReference>
<dbReference type="GO" id="GO:0003924">
    <property type="term" value="F:GTPase activity"/>
    <property type="evidence" value="ECO:0007669"/>
    <property type="project" value="InterPro"/>
</dbReference>
<dbReference type="GO" id="GO:0008089">
    <property type="term" value="P:anterograde axonal transport"/>
    <property type="evidence" value="ECO:0000315"/>
    <property type="project" value="UniProtKB"/>
</dbReference>
<dbReference type="GO" id="GO:0061909">
    <property type="term" value="P:autophagosome-lysosome fusion"/>
    <property type="evidence" value="ECO:0000315"/>
    <property type="project" value="FlyBase"/>
</dbReference>
<dbReference type="GO" id="GO:0098930">
    <property type="term" value="P:axonal transport"/>
    <property type="evidence" value="ECO:0000315"/>
    <property type="project" value="UniProtKB"/>
</dbReference>
<dbReference type="GO" id="GO:0051301">
    <property type="term" value="P:cell division"/>
    <property type="evidence" value="ECO:0007669"/>
    <property type="project" value="UniProtKB-KW"/>
</dbReference>
<dbReference type="GO" id="GO:1902774">
    <property type="term" value="P:late endosome to lysosome transport"/>
    <property type="evidence" value="ECO:0000315"/>
    <property type="project" value="UniProtKB"/>
</dbReference>
<dbReference type="GO" id="GO:0032418">
    <property type="term" value="P:lysosome localization"/>
    <property type="evidence" value="ECO:0000315"/>
    <property type="project" value="FlyBase"/>
</dbReference>
<dbReference type="GO" id="GO:0007269">
    <property type="term" value="P:neurotransmitter secretion"/>
    <property type="evidence" value="ECO:0000315"/>
    <property type="project" value="UniProtKB"/>
</dbReference>
<dbReference type="GO" id="GO:0099054">
    <property type="term" value="P:presynapse assembly"/>
    <property type="evidence" value="ECO:0000315"/>
    <property type="project" value="UniProtKB"/>
</dbReference>
<dbReference type="GO" id="GO:0015031">
    <property type="term" value="P:protein transport"/>
    <property type="evidence" value="ECO:0007669"/>
    <property type="project" value="UniProtKB-KW"/>
</dbReference>
<dbReference type="GO" id="GO:0001666">
    <property type="term" value="P:response to hypoxia"/>
    <property type="evidence" value="ECO:0000315"/>
    <property type="project" value="FlyBase"/>
</dbReference>
<dbReference type="GO" id="GO:0000819">
    <property type="term" value="P:sister chromatid segregation"/>
    <property type="evidence" value="ECO:0000315"/>
    <property type="project" value="UniProtKB"/>
</dbReference>
<dbReference type="CDD" id="cd04159">
    <property type="entry name" value="Arl10_like"/>
    <property type="match status" value="1"/>
</dbReference>
<dbReference type="FunFam" id="3.40.50.300:FF:000247">
    <property type="entry name" value="ADP-ribosylation factor-like GTPase 8A"/>
    <property type="match status" value="1"/>
</dbReference>
<dbReference type="Gene3D" id="3.40.50.300">
    <property type="entry name" value="P-loop containing nucleotide triphosphate hydrolases"/>
    <property type="match status" value="1"/>
</dbReference>
<dbReference type="InterPro" id="IPR044154">
    <property type="entry name" value="Arl8a/8b"/>
</dbReference>
<dbReference type="InterPro" id="IPR027417">
    <property type="entry name" value="P-loop_NTPase"/>
</dbReference>
<dbReference type="InterPro" id="IPR005225">
    <property type="entry name" value="Small_GTP-bd"/>
</dbReference>
<dbReference type="InterPro" id="IPR006689">
    <property type="entry name" value="Small_GTPase_ARF/SAR"/>
</dbReference>
<dbReference type="NCBIfam" id="TIGR00231">
    <property type="entry name" value="small_GTP"/>
    <property type="match status" value="1"/>
</dbReference>
<dbReference type="PANTHER" id="PTHR45732">
    <property type="entry name" value="ADP-RIBOSYLATION FACTOR-LIKE PROTEIN 8"/>
    <property type="match status" value="1"/>
</dbReference>
<dbReference type="PANTHER" id="PTHR45732:SF7">
    <property type="entry name" value="ADP-RIBOSYLATION FACTOR-LIKE PROTEIN 8"/>
    <property type="match status" value="1"/>
</dbReference>
<dbReference type="Pfam" id="PF00025">
    <property type="entry name" value="Arf"/>
    <property type="match status" value="1"/>
</dbReference>
<dbReference type="PRINTS" id="PR00328">
    <property type="entry name" value="SAR1GTPBP"/>
</dbReference>
<dbReference type="SMART" id="SM00177">
    <property type="entry name" value="ARF"/>
    <property type="match status" value="1"/>
</dbReference>
<dbReference type="SMART" id="SM00175">
    <property type="entry name" value="RAB"/>
    <property type="match status" value="1"/>
</dbReference>
<dbReference type="SMART" id="SM00178">
    <property type="entry name" value="SAR"/>
    <property type="match status" value="1"/>
</dbReference>
<dbReference type="SUPFAM" id="SSF52540">
    <property type="entry name" value="P-loop containing nucleoside triphosphate hydrolases"/>
    <property type="match status" value="1"/>
</dbReference>
<dbReference type="PROSITE" id="PS51417">
    <property type="entry name" value="ARF"/>
    <property type="match status" value="1"/>
</dbReference>